<keyword id="KW-0256">Endoplasmic reticulum</keyword>
<keyword id="KW-0444">Lipid biosynthesis</keyword>
<keyword id="KW-0443">Lipid metabolism</keyword>
<keyword id="KW-0472">Membrane</keyword>
<keyword id="KW-1185">Reference proteome</keyword>
<keyword id="KW-0752">Steroid biosynthesis</keyword>
<keyword id="KW-0753">Steroid metabolism</keyword>
<keyword id="KW-0756">Sterol biosynthesis</keyword>
<keyword id="KW-1207">Sterol metabolism</keyword>
<keyword id="KW-0812">Transmembrane</keyword>
<keyword id="KW-1133">Transmembrane helix</keyword>
<name>ERG28_GIBZE</name>
<dbReference type="EMBL" id="HG970334">
    <property type="protein sequence ID" value="CEF86901.1"/>
    <property type="molecule type" value="Genomic_DNA"/>
</dbReference>
<dbReference type="RefSeq" id="XP_011324240.1">
    <property type="nucleotide sequence ID" value="XM_011325938.1"/>
</dbReference>
<dbReference type="FunCoup" id="I1RNT1">
    <property type="interactions" value="254"/>
</dbReference>
<dbReference type="STRING" id="229533.I1RNT1"/>
<dbReference type="KEGG" id="fgr:FGSG_05669"/>
<dbReference type="VEuPathDB" id="FungiDB:FGRAMPH1_01G18473"/>
<dbReference type="eggNOG" id="KOG3455">
    <property type="taxonomic scope" value="Eukaryota"/>
</dbReference>
<dbReference type="HOGENOM" id="CLU_114589_0_0_1"/>
<dbReference type="InParanoid" id="I1RNT1"/>
<dbReference type="OrthoDB" id="5621at110618"/>
<dbReference type="UniPathway" id="UPA00768"/>
<dbReference type="Proteomes" id="UP000070720">
    <property type="component" value="Chromosome 3"/>
</dbReference>
<dbReference type="GO" id="GO:0005789">
    <property type="term" value="C:endoplasmic reticulum membrane"/>
    <property type="evidence" value="ECO:0007669"/>
    <property type="project" value="UniProtKB-SubCell"/>
</dbReference>
<dbReference type="GO" id="GO:0030674">
    <property type="term" value="F:protein-macromolecule adaptor activity"/>
    <property type="evidence" value="ECO:0007669"/>
    <property type="project" value="TreeGrafter"/>
</dbReference>
<dbReference type="GO" id="GO:0016126">
    <property type="term" value="P:sterol biosynthetic process"/>
    <property type="evidence" value="ECO:0007669"/>
    <property type="project" value="UniProtKB-UniPathway"/>
</dbReference>
<dbReference type="InterPro" id="IPR005352">
    <property type="entry name" value="Erg28"/>
</dbReference>
<dbReference type="PANTHER" id="PTHR15451:SF19">
    <property type="entry name" value="ERGOSTEROL BIOSYNTHETIC PROTEIN 28 HOMOLOG"/>
    <property type="match status" value="1"/>
</dbReference>
<dbReference type="PANTHER" id="PTHR15451">
    <property type="entry name" value="ERGOSTEROL BIOSYNTHETIC PROTEIN 28-RELATED"/>
    <property type="match status" value="1"/>
</dbReference>
<dbReference type="Pfam" id="PF03694">
    <property type="entry name" value="Erg28"/>
    <property type="match status" value="1"/>
</dbReference>
<feature type="chain" id="PRO_0000454366" description="Ergosterol biosynthetic protein 28">
    <location>
        <begin position="1"/>
        <end position="170"/>
    </location>
</feature>
<feature type="transmembrane region" description="Helical" evidence="2">
    <location>
        <begin position="7"/>
        <end position="27"/>
    </location>
</feature>
<feature type="transmembrane region" description="Helical" evidence="2">
    <location>
        <begin position="116"/>
        <end position="136"/>
    </location>
</feature>
<feature type="transmembrane region" description="Helical" evidence="2">
    <location>
        <begin position="141"/>
        <end position="161"/>
    </location>
</feature>
<reference key="1">
    <citation type="journal article" date="2007" name="Science">
        <title>The Fusarium graminearum genome reveals a link between localized polymorphism and pathogen specialization.</title>
        <authorList>
            <person name="Cuomo C.A."/>
            <person name="Gueldener U."/>
            <person name="Xu J.-R."/>
            <person name="Trail F."/>
            <person name="Turgeon B.G."/>
            <person name="Di Pietro A."/>
            <person name="Walton J.D."/>
            <person name="Ma L.-J."/>
            <person name="Baker S.E."/>
            <person name="Rep M."/>
            <person name="Adam G."/>
            <person name="Antoniw J."/>
            <person name="Baldwin T."/>
            <person name="Calvo S.E."/>
            <person name="Chang Y.-L."/>
            <person name="DeCaprio D."/>
            <person name="Gale L.R."/>
            <person name="Gnerre S."/>
            <person name="Goswami R.S."/>
            <person name="Hammond-Kosack K."/>
            <person name="Harris L.J."/>
            <person name="Hilburn K."/>
            <person name="Kennell J.C."/>
            <person name="Kroken S."/>
            <person name="Magnuson J.K."/>
            <person name="Mannhaupt G."/>
            <person name="Mauceli E.W."/>
            <person name="Mewes H.-W."/>
            <person name="Mitterbauer R."/>
            <person name="Muehlbauer G."/>
            <person name="Muensterkoetter M."/>
            <person name="Nelson D."/>
            <person name="O'Donnell K."/>
            <person name="Ouellet T."/>
            <person name="Qi W."/>
            <person name="Quesneville H."/>
            <person name="Roncero M.I.G."/>
            <person name="Seong K.-Y."/>
            <person name="Tetko I.V."/>
            <person name="Urban M."/>
            <person name="Waalwijk C."/>
            <person name="Ward T.J."/>
            <person name="Yao J."/>
            <person name="Birren B.W."/>
            <person name="Kistler H.C."/>
        </authorList>
    </citation>
    <scope>NUCLEOTIDE SEQUENCE [LARGE SCALE GENOMIC DNA]</scope>
    <source>
        <strain>ATCC MYA-4620 / CBS 123657 / FGSC 9075 / NRRL 31084 / PH-1</strain>
    </source>
</reference>
<reference key="2">
    <citation type="journal article" date="2010" name="Nature">
        <title>Comparative genomics reveals mobile pathogenicity chromosomes in Fusarium.</title>
        <authorList>
            <person name="Ma L.-J."/>
            <person name="van der Does H.C."/>
            <person name="Borkovich K.A."/>
            <person name="Coleman J.J."/>
            <person name="Daboussi M.-J."/>
            <person name="Di Pietro A."/>
            <person name="Dufresne M."/>
            <person name="Freitag M."/>
            <person name="Grabherr M."/>
            <person name="Henrissat B."/>
            <person name="Houterman P.M."/>
            <person name="Kang S."/>
            <person name="Shim W.-B."/>
            <person name="Woloshuk C."/>
            <person name="Xie X."/>
            <person name="Xu J.-R."/>
            <person name="Antoniw J."/>
            <person name="Baker S.E."/>
            <person name="Bluhm B.H."/>
            <person name="Breakspear A."/>
            <person name="Brown D.W."/>
            <person name="Butchko R.A.E."/>
            <person name="Chapman S."/>
            <person name="Coulson R."/>
            <person name="Coutinho P.M."/>
            <person name="Danchin E.G.J."/>
            <person name="Diener A."/>
            <person name="Gale L.R."/>
            <person name="Gardiner D.M."/>
            <person name="Goff S."/>
            <person name="Hammond-Kosack K.E."/>
            <person name="Hilburn K."/>
            <person name="Hua-Van A."/>
            <person name="Jonkers W."/>
            <person name="Kazan K."/>
            <person name="Kodira C.D."/>
            <person name="Koehrsen M."/>
            <person name="Kumar L."/>
            <person name="Lee Y.-H."/>
            <person name="Li L."/>
            <person name="Manners J.M."/>
            <person name="Miranda-Saavedra D."/>
            <person name="Mukherjee M."/>
            <person name="Park G."/>
            <person name="Park J."/>
            <person name="Park S.-Y."/>
            <person name="Proctor R.H."/>
            <person name="Regev A."/>
            <person name="Ruiz-Roldan M.C."/>
            <person name="Sain D."/>
            <person name="Sakthikumar S."/>
            <person name="Sykes S."/>
            <person name="Schwartz D.C."/>
            <person name="Turgeon B.G."/>
            <person name="Wapinski I."/>
            <person name="Yoder O."/>
            <person name="Young S."/>
            <person name="Zeng Q."/>
            <person name="Zhou S."/>
            <person name="Galagan J."/>
            <person name="Cuomo C.A."/>
            <person name="Kistler H.C."/>
            <person name="Rep M."/>
        </authorList>
    </citation>
    <scope>GENOME REANNOTATION</scope>
    <source>
        <strain>ATCC MYA-4620 / CBS 123657 / FGSC 9075 / NRRL 31084 / PH-1</strain>
    </source>
</reference>
<reference key="3">
    <citation type="journal article" date="2015" name="BMC Genomics">
        <title>The completed genome sequence of the pathogenic ascomycete fungus Fusarium graminearum.</title>
        <authorList>
            <person name="King R."/>
            <person name="Urban M."/>
            <person name="Hammond-Kosack M.C.U."/>
            <person name="Hassani-Pak K."/>
            <person name="Hammond-Kosack K.E."/>
        </authorList>
    </citation>
    <scope>NUCLEOTIDE SEQUENCE [LARGE SCALE GENOMIC DNA]</scope>
    <source>
        <strain>ATCC MYA-4620 / CBS 123657 / FGSC 9075 / NRRL 31084 / PH-1</strain>
    </source>
</reference>
<reference key="4">
    <citation type="journal article" date="2013" name="New Phytol.">
        <title>Characterization of the sterol 14alpha-demethylases of Fusarium graminearum identifies a novel genus-specific CYP51 function.</title>
        <authorList>
            <person name="Fan J."/>
            <person name="Urban M."/>
            <person name="Parker J.E."/>
            <person name="Brewer H.C."/>
            <person name="Kelly S.L."/>
            <person name="Hammond-Kosack K.E."/>
            <person name="Fraaije B.A."/>
            <person name="Liu X."/>
            <person name="Cools H.J."/>
        </authorList>
    </citation>
    <scope>FUNCTION</scope>
    <scope>PATHWAY</scope>
</reference>
<organism>
    <name type="scientific">Gibberella zeae (strain ATCC MYA-4620 / CBS 123657 / FGSC 9075 / NRRL 31084 / PH-1)</name>
    <name type="common">Wheat head blight fungus</name>
    <name type="synonym">Fusarium graminearum</name>
    <dbReference type="NCBI Taxonomy" id="229533"/>
    <lineage>
        <taxon>Eukaryota</taxon>
        <taxon>Fungi</taxon>
        <taxon>Dikarya</taxon>
        <taxon>Ascomycota</taxon>
        <taxon>Pezizomycotina</taxon>
        <taxon>Sordariomycetes</taxon>
        <taxon>Hypocreomycetidae</taxon>
        <taxon>Hypocreales</taxon>
        <taxon>Nectriaceae</taxon>
        <taxon>Fusarium</taxon>
    </lineage>
</organism>
<sequence length="170" mass="19545">MDALKPFLPEAKGVLPYYMIILSIISIGNSLQAYTTLHFSRRVYNGRFIRNPKLPSKTNNFEPEDQTNKLIPAQNDPKATDQLTPLAGRLFGTWTLITCIVRCYAAYNLHIGPVYTLAYWTYIVAFSHFASELFVFKTMTFGLPQYFPFALASTSLIWMPLVRDHYVQYN</sequence>
<proteinExistence type="inferred from homology"/>
<evidence type="ECO:0000250" key="1">
    <source>
        <dbReference type="UniProtKB" id="P40030"/>
    </source>
</evidence>
<evidence type="ECO:0000255" key="2"/>
<evidence type="ECO:0000269" key="3">
    <source>
    </source>
</evidence>
<evidence type="ECO:0000305" key="4"/>
<evidence type="ECO:0000305" key="5">
    <source>
    </source>
</evidence>
<gene>
    <name evidence="1" type="primary">ERG28</name>
    <name type="ORF">FG05669</name>
    <name type="ORF">FGRAMPH1_01T18473</name>
</gene>
<accession>I1RNT1</accession>
<protein>
    <recommendedName>
        <fullName evidence="1">Ergosterol biosynthetic protein 28</fullName>
    </recommendedName>
</protein>
<comment type="function">
    <text evidence="1 5">Sterol 24-C-methyltransferase; part of the third module of ergosterol biosynthesis pathway that includes the late steps of the pathway (By similarity). ERG28 has a role as a scaffold to help anchor the catalytic components of the C-4 demethylation complex ERG25, ERG26 and ERG27 to the endoplasmic reticulum (By similarity). The third module or late pathway involves the ergosterol synthesis itself through consecutive reactions that mainly occur in the endoplasmic reticulum (ER) membrane. Firstly, the squalene synthase ERG9 catalyzes the condensation of 2 farnesyl pyrophosphate moieties to form squalene, which is the precursor of all steroids. Squalene synthase is crucial for balancing the incorporation of farnesyl diphosphate (FPP) into sterol and nonsterol isoprene synthesis. Secondly, squalene is converted into lanosterol by the consecutive action of the squalene epoxidase ERG1 and the lanosterol synthase ERG7. Then, the delta(24)-sterol C-methyltransferase ERG6 methylates lanosterol at C-24 to produce eburicol. Eburicol is the substrate of the sterol 14-alpha demethylase encoded by CYP51A, CYP51B and CYP51C, to yield 4,4,24-trimethyl ergosta-8,14,24(28)-trienol. CYP51B encodes the enzyme primarily responsible for sterol 14-alpha-demethylation, and plays an essential role in ascospore formation. CYP51A encodes an additional sterol 14-alpha-demethylase, induced on ergosterol depletion and responsible for the intrinsic variation in azole sensitivity. The third CYP51 isoform, CYP51C, does not encode a sterol 14-alpha-demethylase, but is required for full virulence on host wheat ears. The C-14 reductase ERG24 then reduces the C14=C15 double bond which leads to 4,4-dimethylfecosterol. A sequence of further demethylations at C-4, involving the C-4 demethylation complex containing the C-4 methylsterol oxidases ERG25, the sterol-4-alpha-carboxylate 3-dehydrogenase ERG26 and the 3-keto-steroid reductase ERG27, leads to the production of fecosterol via 4-methylfecosterol. ERG28 has a role as a scaffold to help anchor ERG25, ERG26 and ERG27 to the endoplasmic reticulum. The C-8 sterol isomerase ERG2 then catalyzes the reaction which results in unsaturation at C-7 in the B ring of sterols and thus converts fecosterol to episterol. The sterol-C5-desaturases ERG3A and ERG3BB then catalyze the introduction of a C-5 double bond in the B ring to produce 5-dehydroepisterol. The C-22 sterol desaturases ERG5A and ERG5B further convert 5-dehydroepisterol into ergosta-5,7,22,24(28)-tetraen-3beta-ol by forming the C-22(23) double bond in the sterol side chain. Finally, ergosta-5,7,22,24(28)-tetraen-3beta-ol is substrate of the C-24(28) sterol reductase ERG4 to produce ergosterol (Probable).</text>
</comment>
<comment type="pathway">
    <text evidence="1">Steroid metabolism; ergosterol biosynthesis.</text>
</comment>
<comment type="subunit">
    <text evidence="1">Heterotetramer of ERG25, ERG26, ERG27 and ERG28 (By similarity). ERG28 acts as a scaffold to tether ERG27 and other 4,4-demethylation-related enzymes, forming a demethylation enzyme complex, in the endoplasmic reticulum (By similarity).</text>
</comment>
<comment type="subcellular location">
    <subcellularLocation>
        <location evidence="1">Endoplasmic reticulum membrane</location>
        <topology evidence="2">Multi-pass membrane protein</topology>
    </subcellularLocation>
</comment>
<comment type="miscellaneous">
    <text evidence="3">In Fusarium, the biosynthesis pathway of the sterol precursors leading to the prevalent sterol ergosterol differs from yeast. The ringsystem of lanosterol in S.cerevisiae is firstly demethylised in three enzymatic steps leading to the intermediate zymosterol and secondly a methyl group is added to zymosterol by the sterol 24-C-methyltransferase to form fecosterol. In Fusarium, lanosterol is firstly transmethylated by the sterol 24-C-methyltransferase leading to the intermediate eburicol and secondly demethylated in three steps to form fecosterol.</text>
</comment>
<comment type="similarity">
    <text evidence="4">Belongs to the ERG28 family.</text>
</comment>